<organism>
    <name type="scientific">Staphylococcus aureus (strain NCTC 8325 / PS 47)</name>
    <dbReference type="NCBI Taxonomy" id="93061"/>
    <lineage>
        <taxon>Bacteria</taxon>
        <taxon>Bacillati</taxon>
        <taxon>Bacillota</taxon>
        <taxon>Bacilli</taxon>
        <taxon>Bacillales</taxon>
        <taxon>Staphylococcaceae</taxon>
        <taxon>Staphylococcus</taxon>
    </lineage>
</organism>
<protein>
    <recommendedName>
        <fullName>UTP--glucose-1-phosphate uridylyltransferase</fullName>
        <ecNumber>2.7.7.9</ecNumber>
    </recommendedName>
    <alternativeName>
        <fullName>Alpha-D-glucosyl-1-phosphate uridylyltransferase</fullName>
    </alternativeName>
    <alternativeName>
        <fullName>UDP-glucose pyrophosphorylase</fullName>
        <shortName>UDPGP</shortName>
    </alternativeName>
    <alternativeName>
        <fullName>Uridine diphosphoglucose pyrophosphorylase</fullName>
    </alternativeName>
</protein>
<dbReference type="EC" id="2.7.7.9"/>
<dbReference type="EMBL" id="CP000253">
    <property type="protein sequence ID" value="ABD31804.1"/>
    <property type="status" value="ALT_INIT"/>
    <property type="molecule type" value="Genomic_DNA"/>
</dbReference>
<dbReference type="RefSeq" id="YP_501260.1">
    <property type="nucleotide sequence ID" value="NC_007795.1"/>
</dbReference>
<dbReference type="SMR" id="Q2G1T6"/>
<dbReference type="STRING" id="93061.SAOUHSC_02801"/>
<dbReference type="PaxDb" id="1280-SAXN108_2747"/>
<dbReference type="GeneID" id="3921455"/>
<dbReference type="KEGG" id="sao:SAOUHSC_02801"/>
<dbReference type="PATRIC" id="fig|93061.5.peg.2533"/>
<dbReference type="eggNOG" id="COG1210">
    <property type="taxonomic scope" value="Bacteria"/>
</dbReference>
<dbReference type="HOGENOM" id="CLU_029499_1_3_9"/>
<dbReference type="OrthoDB" id="9803871at2"/>
<dbReference type="BioCyc" id="MetaCyc:MONOMER-20001"/>
<dbReference type="UniPathway" id="UPA00894"/>
<dbReference type="Proteomes" id="UP000008816">
    <property type="component" value="Chromosome"/>
</dbReference>
<dbReference type="GO" id="GO:0003983">
    <property type="term" value="F:UTP:glucose-1-phosphate uridylyltransferase activity"/>
    <property type="evidence" value="ECO:0007669"/>
    <property type="project" value="UniProtKB-EC"/>
</dbReference>
<dbReference type="GO" id="GO:0009246">
    <property type="term" value="P:enterobacterial common antigen biosynthetic process"/>
    <property type="evidence" value="ECO:0007669"/>
    <property type="project" value="UniProtKB-UniPathway"/>
</dbReference>
<dbReference type="GO" id="GO:0006011">
    <property type="term" value="P:UDP-alpha-D-glucose metabolic process"/>
    <property type="evidence" value="ECO:0007669"/>
    <property type="project" value="InterPro"/>
</dbReference>
<dbReference type="CDD" id="cd02541">
    <property type="entry name" value="UGPase_prokaryotic"/>
    <property type="match status" value="1"/>
</dbReference>
<dbReference type="Gene3D" id="3.90.550.10">
    <property type="entry name" value="Spore Coat Polysaccharide Biosynthesis Protein SpsA, Chain A"/>
    <property type="match status" value="1"/>
</dbReference>
<dbReference type="InterPro" id="IPR005771">
    <property type="entry name" value="GalU_uridylyltTrfase_bac/arc"/>
</dbReference>
<dbReference type="InterPro" id="IPR005835">
    <property type="entry name" value="NTP_transferase_dom"/>
</dbReference>
<dbReference type="InterPro" id="IPR029044">
    <property type="entry name" value="Nucleotide-diphossugar_trans"/>
</dbReference>
<dbReference type="NCBIfam" id="TIGR01099">
    <property type="entry name" value="galU"/>
    <property type="match status" value="1"/>
</dbReference>
<dbReference type="PANTHER" id="PTHR43197">
    <property type="entry name" value="UTP--GLUCOSE-1-PHOSPHATE URIDYLYLTRANSFERASE"/>
    <property type="match status" value="1"/>
</dbReference>
<dbReference type="PANTHER" id="PTHR43197:SF1">
    <property type="entry name" value="UTP--GLUCOSE-1-PHOSPHATE URIDYLYLTRANSFERASE"/>
    <property type="match status" value="1"/>
</dbReference>
<dbReference type="Pfam" id="PF00483">
    <property type="entry name" value="NTP_transferase"/>
    <property type="match status" value="1"/>
</dbReference>
<dbReference type="SUPFAM" id="SSF53448">
    <property type="entry name" value="Nucleotide-diphospho-sugar transferases"/>
    <property type="match status" value="1"/>
</dbReference>
<accession>Q2G1T6</accession>
<comment type="function">
    <text evidence="1 2">Catalyzes the formation of UDP-glucose from glucose-1-phosphate and UTP (Probable). This is an intermediate step in the biosynthesis of diglucosyl-diacylglycerol (Glc2-DAG), i.e. the predominant glycolipid found in the S.aureus membrane, which is also used as a membrane anchor for lipoteichoic acid (LTA).</text>
</comment>
<comment type="catalytic activity">
    <reaction>
        <text>alpha-D-glucose 1-phosphate + UTP + H(+) = UDP-alpha-D-glucose + diphosphate</text>
        <dbReference type="Rhea" id="RHEA:19889"/>
        <dbReference type="ChEBI" id="CHEBI:15378"/>
        <dbReference type="ChEBI" id="CHEBI:33019"/>
        <dbReference type="ChEBI" id="CHEBI:46398"/>
        <dbReference type="ChEBI" id="CHEBI:58601"/>
        <dbReference type="ChEBI" id="CHEBI:58885"/>
        <dbReference type="EC" id="2.7.7.9"/>
    </reaction>
</comment>
<comment type="pathway">
    <text evidence="1">Glycolipid metabolism; diglucosyl-diacylglycerol biosynthesis.</text>
</comment>
<comment type="similarity">
    <text evidence="2">Belongs to the UDPGP type 2 family.</text>
</comment>
<comment type="sequence caution" evidence="2">
    <conflict type="erroneous initiation">
        <sequence resource="EMBL-CDS" id="ABD31804"/>
    </conflict>
</comment>
<name>GTAB_STAA8</name>
<sequence>MKKIKKAIIPAAGLGTRFLPATKAMPKEMLPILDKPTIQYIVEEAARAGIEDIIIVTGRHKRAIEDHFDSQKELEMVLKEKGKSELLEKVQYSTELANIFYVRQKEQKGLGHAISSARQFIGNEPFAVLLGDDIVESEVPAVKQLIDVYEETGHSVIGVQEVPEADTHRYGIIDPLTKNGRQYEVKKFVEKPAQGTAPSNLAIMGRYVLTPEIFDYLKTQKEGAGNEIQLTDAIERMNNDNQVYAYDFEGERYDVGEKLGFVKTTIEYALKDDSMREELTRFIKALGL</sequence>
<proteinExistence type="evidence at protein level"/>
<keyword id="KW-0119">Carbohydrate metabolism</keyword>
<keyword id="KW-0548">Nucleotidyltransferase</keyword>
<keyword id="KW-1185">Reference proteome</keyword>
<keyword id="KW-0808">Transferase</keyword>
<reference key="1">
    <citation type="book" date="2006" name="Gram positive pathogens, 2nd edition">
        <title>The Staphylococcus aureus NCTC 8325 genome.</title>
        <editorList>
            <person name="Fischetti V."/>
            <person name="Novick R."/>
            <person name="Ferretti J."/>
            <person name="Portnoy D."/>
            <person name="Rood J."/>
        </editorList>
        <authorList>
            <person name="Gillaspy A.F."/>
            <person name="Worrell V."/>
            <person name="Orvis J."/>
            <person name="Roe B.A."/>
            <person name="Dyer D.W."/>
            <person name="Iandolo J.J."/>
        </authorList>
    </citation>
    <scope>NUCLEOTIDE SEQUENCE [LARGE SCALE GENOMIC DNA]</scope>
    <source>
        <strain>NCTC 8325 / PS 47</strain>
    </source>
</reference>
<reference key="2">
    <citation type="journal article" date="2007" name="J. Bacteriol.">
        <title>Genes required for glycolipid synthesis and lipoteichoic acid anchoring in Staphylococcus aureus.</title>
        <authorList>
            <person name="Gruendling A."/>
            <person name="Schneewind O."/>
        </authorList>
    </citation>
    <scope>FUNCTION IN GLYCOLIPID AND LTA BIOSYNTHESIS</scope>
    <scope>PATHWAY</scope>
</reference>
<evidence type="ECO:0000269" key="1">
    <source>
    </source>
</evidence>
<evidence type="ECO:0000305" key="2"/>
<gene>
    <name type="primary">gtaB</name>
    <name type="ordered locus">SAOUHSC_02801</name>
</gene>
<feature type="chain" id="PRO_0000308301" description="UTP--glucose-1-phosphate uridylyltransferase">
    <location>
        <begin position="1"/>
        <end position="288"/>
    </location>
</feature>